<name>LGT_STRTD</name>
<evidence type="ECO:0000255" key="1">
    <source>
        <dbReference type="HAMAP-Rule" id="MF_01147"/>
    </source>
</evidence>
<protein>
    <recommendedName>
        <fullName evidence="1">Phosphatidylglycerol--prolipoprotein diacylglyceryl transferase</fullName>
        <ecNumber evidence="1">2.5.1.145</ecNumber>
    </recommendedName>
</protein>
<keyword id="KW-1003">Cell membrane</keyword>
<keyword id="KW-0472">Membrane</keyword>
<keyword id="KW-0808">Transferase</keyword>
<keyword id="KW-0812">Transmembrane</keyword>
<keyword id="KW-1133">Transmembrane helix</keyword>
<gene>
    <name evidence="1" type="primary">lgt</name>
    <name type="ordered locus">STER_0720</name>
</gene>
<accession>Q03LE6</accession>
<feature type="chain" id="PRO_1000053517" description="Phosphatidylglycerol--prolipoprotein diacylglyceryl transferase">
    <location>
        <begin position="1"/>
        <end position="263"/>
    </location>
</feature>
<feature type="transmembrane region" description="Helical" evidence="1">
    <location>
        <begin position="15"/>
        <end position="35"/>
    </location>
</feature>
<feature type="transmembrane region" description="Helical" evidence="1">
    <location>
        <begin position="52"/>
        <end position="72"/>
    </location>
</feature>
<feature type="transmembrane region" description="Helical" evidence="1">
    <location>
        <begin position="83"/>
        <end position="103"/>
    </location>
</feature>
<feature type="transmembrane region" description="Helical" evidence="1">
    <location>
        <begin position="112"/>
        <end position="132"/>
    </location>
</feature>
<feature type="transmembrane region" description="Helical" evidence="1">
    <location>
        <begin position="170"/>
        <end position="190"/>
    </location>
</feature>
<feature type="transmembrane region" description="Helical" evidence="1">
    <location>
        <begin position="200"/>
        <end position="220"/>
    </location>
</feature>
<feature type="transmembrane region" description="Helical" evidence="1">
    <location>
        <begin position="227"/>
        <end position="247"/>
    </location>
</feature>
<feature type="binding site" evidence="1">
    <location>
        <position position="134"/>
    </location>
    <ligand>
        <name>a 1,2-diacyl-sn-glycero-3-phospho-(1'-sn-glycerol)</name>
        <dbReference type="ChEBI" id="CHEBI:64716"/>
    </ligand>
</feature>
<organism>
    <name type="scientific">Streptococcus thermophilus (strain ATCC BAA-491 / LMD-9)</name>
    <dbReference type="NCBI Taxonomy" id="322159"/>
    <lineage>
        <taxon>Bacteria</taxon>
        <taxon>Bacillati</taxon>
        <taxon>Bacillota</taxon>
        <taxon>Bacilli</taxon>
        <taxon>Lactobacillales</taxon>
        <taxon>Streptococcaceae</taxon>
        <taxon>Streptococcus</taxon>
    </lineage>
</organism>
<dbReference type="EC" id="2.5.1.145" evidence="1"/>
<dbReference type="EMBL" id="CP000419">
    <property type="protein sequence ID" value="ABJ65976.1"/>
    <property type="molecule type" value="Genomic_DNA"/>
</dbReference>
<dbReference type="RefSeq" id="WP_002952714.1">
    <property type="nucleotide sequence ID" value="NC_008532.1"/>
</dbReference>
<dbReference type="SMR" id="Q03LE6"/>
<dbReference type="KEGG" id="ste:STER_0720"/>
<dbReference type="HOGENOM" id="CLU_013386_0_1_9"/>
<dbReference type="UniPathway" id="UPA00664"/>
<dbReference type="GO" id="GO:0005886">
    <property type="term" value="C:plasma membrane"/>
    <property type="evidence" value="ECO:0007669"/>
    <property type="project" value="UniProtKB-SubCell"/>
</dbReference>
<dbReference type="GO" id="GO:0008961">
    <property type="term" value="F:phosphatidylglycerol-prolipoprotein diacylglyceryl transferase activity"/>
    <property type="evidence" value="ECO:0007669"/>
    <property type="project" value="UniProtKB-UniRule"/>
</dbReference>
<dbReference type="GO" id="GO:0042158">
    <property type="term" value="P:lipoprotein biosynthetic process"/>
    <property type="evidence" value="ECO:0007669"/>
    <property type="project" value="UniProtKB-UniRule"/>
</dbReference>
<dbReference type="HAMAP" id="MF_01147">
    <property type="entry name" value="Lgt"/>
    <property type="match status" value="1"/>
</dbReference>
<dbReference type="InterPro" id="IPR001640">
    <property type="entry name" value="Lgt"/>
</dbReference>
<dbReference type="NCBIfam" id="TIGR00544">
    <property type="entry name" value="lgt"/>
    <property type="match status" value="1"/>
</dbReference>
<dbReference type="PANTHER" id="PTHR30589:SF0">
    <property type="entry name" value="PHOSPHATIDYLGLYCEROL--PROLIPOPROTEIN DIACYLGLYCERYL TRANSFERASE"/>
    <property type="match status" value="1"/>
</dbReference>
<dbReference type="PANTHER" id="PTHR30589">
    <property type="entry name" value="PROLIPOPROTEIN DIACYLGLYCERYL TRANSFERASE"/>
    <property type="match status" value="1"/>
</dbReference>
<dbReference type="Pfam" id="PF01790">
    <property type="entry name" value="LGT"/>
    <property type="match status" value="1"/>
</dbReference>
<dbReference type="PROSITE" id="PS01311">
    <property type="entry name" value="LGT"/>
    <property type="match status" value="1"/>
</dbReference>
<reference key="1">
    <citation type="journal article" date="2006" name="Proc. Natl. Acad. Sci. U.S.A.">
        <title>Comparative genomics of the lactic acid bacteria.</title>
        <authorList>
            <person name="Makarova K.S."/>
            <person name="Slesarev A."/>
            <person name="Wolf Y.I."/>
            <person name="Sorokin A."/>
            <person name="Mirkin B."/>
            <person name="Koonin E.V."/>
            <person name="Pavlov A."/>
            <person name="Pavlova N."/>
            <person name="Karamychev V."/>
            <person name="Polouchine N."/>
            <person name="Shakhova V."/>
            <person name="Grigoriev I."/>
            <person name="Lou Y."/>
            <person name="Rohksar D."/>
            <person name="Lucas S."/>
            <person name="Huang K."/>
            <person name="Goodstein D.M."/>
            <person name="Hawkins T."/>
            <person name="Plengvidhya V."/>
            <person name="Welker D."/>
            <person name="Hughes J."/>
            <person name="Goh Y."/>
            <person name="Benson A."/>
            <person name="Baldwin K."/>
            <person name="Lee J.-H."/>
            <person name="Diaz-Muniz I."/>
            <person name="Dosti B."/>
            <person name="Smeianov V."/>
            <person name="Wechter W."/>
            <person name="Barabote R."/>
            <person name="Lorca G."/>
            <person name="Altermann E."/>
            <person name="Barrangou R."/>
            <person name="Ganesan B."/>
            <person name="Xie Y."/>
            <person name="Rawsthorne H."/>
            <person name="Tamir D."/>
            <person name="Parker C."/>
            <person name="Breidt F."/>
            <person name="Broadbent J.R."/>
            <person name="Hutkins R."/>
            <person name="O'Sullivan D."/>
            <person name="Steele J."/>
            <person name="Unlu G."/>
            <person name="Saier M.H. Jr."/>
            <person name="Klaenhammer T."/>
            <person name="Richardson P."/>
            <person name="Kozyavkin S."/>
            <person name="Weimer B.C."/>
            <person name="Mills D.A."/>
        </authorList>
    </citation>
    <scope>NUCLEOTIDE SEQUENCE [LARGE SCALE GENOMIC DNA]</scope>
    <source>
        <strain>ATCC BAA-491 / LMD-9</strain>
    </source>
</reference>
<comment type="function">
    <text evidence="1">Catalyzes the transfer of the diacylglyceryl group from phosphatidylglycerol to the sulfhydryl group of the N-terminal cysteine of a prolipoprotein, the first step in the formation of mature lipoproteins.</text>
</comment>
<comment type="catalytic activity">
    <reaction evidence="1">
        <text>L-cysteinyl-[prolipoprotein] + a 1,2-diacyl-sn-glycero-3-phospho-(1'-sn-glycerol) = an S-1,2-diacyl-sn-glyceryl-L-cysteinyl-[prolipoprotein] + sn-glycerol 1-phosphate + H(+)</text>
        <dbReference type="Rhea" id="RHEA:56712"/>
        <dbReference type="Rhea" id="RHEA-COMP:14679"/>
        <dbReference type="Rhea" id="RHEA-COMP:14680"/>
        <dbReference type="ChEBI" id="CHEBI:15378"/>
        <dbReference type="ChEBI" id="CHEBI:29950"/>
        <dbReference type="ChEBI" id="CHEBI:57685"/>
        <dbReference type="ChEBI" id="CHEBI:64716"/>
        <dbReference type="ChEBI" id="CHEBI:140658"/>
        <dbReference type="EC" id="2.5.1.145"/>
    </reaction>
</comment>
<comment type="pathway">
    <text evidence="1">Protein modification; lipoprotein biosynthesis (diacylglyceryl transfer).</text>
</comment>
<comment type="subcellular location">
    <subcellularLocation>
        <location evidence="1">Cell membrane</location>
        <topology evidence="1">Multi-pass membrane protein</topology>
    </subcellularLocation>
</comment>
<comment type="similarity">
    <text evidence="1">Belongs to the Lgt family.</text>
</comment>
<proteinExistence type="inferred from homology"/>
<sequence>MLATIDPIALRLGPISIHWYAICIVSGLLLAVYLAQRLAPEKGINPEHILDFILLAFPIAIVGARLYYVIFQWSYYSQNPSEIFAIWNGGIAIYGGLIAGAAVLYWFAKRHAIAVLDFLDIAAPGVMIAQSIGRWGNFVNQEAYGKAVSQLNYLPEIIRQQMFIDGSYRVPTFLYESLWNLVGFSIILGLRYFNKGLRQGDVTSFYLIWYGLGRFVIEGMRTDSLMFVGLRVSQWVSISIIILGAVLLYFRKQRQKADYKMKN</sequence>